<protein>
    <recommendedName>
        <fullName>Histone H3.3 type 1</fullName>
    </recommendedName>
</protein>
<gene>
    <name type="primary">his-71</name>
    <name type="ORF">F45E1.6</name>
</gene>
<reference key="1">
    <citation type="journal article" date="1998" name="Science">
        <title>Genome sequence of the nematode C. elegans: a platform for investigating biology.</title>
        <authorList>
            <consortium name="The C. elegans sequencing consortium"/>
        </authorList>
    </citation>
    <scope>NUCLEOTIDE SEQUENCE [LARGE SCALE GENOMIC DNA]</scope>
    <source>
        <strain>Bristol N2</strain>
    </source>
</reference>
<reference key="2">
    <citation type="journal article" date="2006" name="PLoS Genet.">
        <title>Histone H3.3 variant dynamics in the germline of Caenorhabditis elegans.</title>
        <authorList>
            <person name="Ooi S.L."/>
            <person name="Priess J.R."/>
            <person name="Henikoff S."/>
        </authorList>
    </citation>
    <scope>TISSUE SPECIFICITY</scope>
    <scope>FUNCTION</scope>
</reference>
<proteinExistence type="evidence at protein level"/>
<accession>Q10453</accession>
<dbReference type="EMBL" id="FO080773">
    <property type="protein sequence ID" value="CCD66641.1"/>
    <property type="molecule type" value="Genomic_DNA"/>
</dbReference>
<dbReference type="PIR" id="T16361">
    <property type="entry name" value="T16361"/>
</dbReference>
<dbReference type="RefSeq" id="NP_509344.1">
    <property type="nucleotide sequence ID" value="NM_076943.7"/>
</dbReference>
<dbReference type="PDB" id="4ZBJ">
    <property type="method" value="X-ray"/>
    <property type="resolution" value="2.25 A"/>
    <property type="chains" value="B=62-136"/>
</dbReference>
<dbReference type="PDBsum" id="4ZBJ"/>
<dbReference type="SMR" id="Q10453"/>
<dbReference type="BioGRID" id="45980">
    <property type="interactions" value="4"/>
</dbReference>
<dbReference type="DIP" id="DIP-26634N"/>
<dbReference type="FunCoup" id="Q10453">
    <property type="interactions" value="2975"/>
</dbReference>
<dbReference type="STRING" id="6239.F45E1.6.1"/>
<dbReference type="PaxDb" id="6239-F45E1.6"/>
<dbReference type="PeptideAtlas" id="Q10453"/>
<dbReference type="EnsemblMetazoa" id="F45E1.6.1">
    <property type="protein sequence ID" value="F45E1.6.1"/>
    <property type="gene ID" value="WBGene00001945"/>
</dbReference>
<dbReference type="GeneID" id="181057"/>
<dbReference type="KEGG" id="cel:CELE_F45E1.6"/>
<dbReference type="UCSC" id="F45E1.6.2">
    <property type="organism name" value="c. elegans"/>
</dbReference>
<dbReference type="AGR" id="WB:WBGene00001945"/>
<dbReference type="CTD" id="181057"/>
<dbReference type="WormBase" id="F45E1.6">
    <property type="protein sequence ID" value="CE01943"/>
    <property type="gene ID" value="WBGene00001945"/>
    <property type="gene designation" value="his-71"/>
</dbReference>
<dbReference type="eggNOG" id="KOG1745">
    <property type="taxonomic scope" value="Eukaryota"/>
</dbReference>
<dbReference type="GeneTree" id="ENSGT01110000267215"/>
<dbReference type="HOGENOM" id="CLU_078295_4_0_1"/>
<dbReference type="InParanoid" id="Q10453"/>
<dbReference type="OMA" id="HIFAEMA"/>
<dbReference type="OrthoDB" id="4025405at2759"/>
<dbReference type="PhylomeDB" id="Q10453"/>
<dbReference type="Reactome" id="R-CEL-2559580">
    <property type="pathway name" value="Oxidative Stress Induced Senescence"/>
</dbReference>
<dbReference type="Reactome" id="R-CEL-5250924">
    <property type="pathway name" value="B-WICH complex positively regulates rRNA expression"/>
</dbReference>
<dbReference type="Reactome" id="R-CEL-5578749">
    <property type="pathway name" value="Transcriptional regulation by small RNAs"/>
</dbReference>
<dbReference type="Reactome" id="R-CEL-68616">
    <property type="pathway name" value="Assembly of the ORC complex at the origin of replication"/>
</dbReference>
<dbReference type="Reactome" id="R-CEL-73772">
    <property type="pathway name" value="RNA Polymerase I Promoter Escape"/>
</dbReference>
<dbReference type="Reactome" id="R-CEL-8936459">
    <property type="pathway name" value="RUNX1 regulates genes involved in megakaryocyte differentiation and platelet function"/>
</dbReference>
<dbReference type="Reactome" id="R-CEL-983231">
    <property type="pathway name" value="Factors involved in megakaryocyte development and platelet production"/>
</dbReference>
<dbReference type="Reactome" id="R-CEL-9843940">
    <property type="pathway name" value="Regulation of endogenous retroelements by KRAB-ZFP proteins"/>
</dbReference>
<dbReference type="PRO" id="PR:Q10453"/>
<dbReference type="Proteomes" id="UP000001940">
    <property type="component" value="Chromosome X"/>
</dbReference>
<dbReference type="Bgee" id="WBGene00001945">
    <property type="expression patterns" value="Expressed in pharyngeal muscle cell (C elegans) and 3 other cell types or tissues"/>
</dbReference>
<dbReference type="GO" id="GO:0000786">
    <property type="term" value="C:nucleosome"/>
    <property type="evidence" value="ECO:0007669"/>
    <property type="project" value="UniProtKB-KW"/>
</dbReference>
<dbReference type="GO" id="GO:0005634">
    <property type="term" value="C:nucleus"/>
    <property type="evidence" value="ECO:0000318"/>
    <property type="project" value="GO_Central"/>
</dbReference>
<dbReference type="GO" id="GO:0003677">
    <property type="term" value="F:DNA binding"/>
    <property type="evidence" value="ECO:0007669"/>
    <property type="project" value="UniProtKB-KW"/>
</dbReference>
<dbReference type="GO" id="GO:0046982">
    <property type="term" value="F:protein heterodimerization activity"/>
    <property type="evidence" value="ECO:0007669"/>
    <property type="project" value="InterPro"/>
</dbReference>
<dbReference type="GO" id="GO:0030527">
    <property type="term" value="F:structural constituent of chromatin"/>
    <property type="evidence" value="ECO:0007669"/>
    <property type="project" value="InterPro"/>
</dbReference>
<dbReference type="CDD" id="cd22911">
    <property type="entry name" value="HFD_H3"/>
    <property type="match status" value="1"/>
</dbReference>
<dbReference type="FunFam" id="1.10.20.10:FF:000078">
    <property type="entry name" value="Histone H3"/>
    <property type="match status" value="1"/>
</dbReference>
<dbReference type="FunFam" id="1.10.20.10:FF:000044">
    <property type="entry name" value="Histone H3.3"/>
    <property type="match status" value="1"/>
</dbReference>
<dbReference type="Gene3D" id="1.10.20.10">
    <property type="entry name" value="Histone, subunit A"/>
    <property type="match status" value="1"/>
</dbReference>
<dbReference type="InterPro" id="IPR009072">
    <property type="entry name" value="Histone-fold"/>
</dbReference>
<dbReference type="InterPro" id="IPR007125">
    <property type="entry name" value="Histone_H2A/H2B/H3"/>
</dbReference>
<dbReference type="InterPro" id="IPR000164">
    <property type="entry name" value="Histone_H3/CENP-A"/>
</dbReference>
<dbReference type="PANTHER" id="PTHR11426">
    <property type="entry name" value="HISTONE H3"/>
    <property type="match status" value="1"/>
</dbReference>
<dbReference type="Pfam" id="PF00125">
    <property type="entry name" value="Histone"/>
    <property type="match status" value="1"/>
</dbReference>
<dbReference type="PRINTS" id="PR00622">
    <property type="entry name" value="HISTONEH3"/>
</dbReference>
<dbReference type="SMART" id="SM00428">
    <property type="entry name" value="H3"/>
    <property type="match status" value="1"/>
</dbReference>
<dbReference type="SUPFAM" id="SSF47113">
    <property type="entry name" value="Histone-fold"/>
    <property type="match status" value="1"/>
</dbReference>
<dbReference type="PROSITE" id="PS00322">
    <property type="entry name" value="HISTONE_H3_1"/>
    <property type="match status" value="1"/>
</dbReference>
<dbReference type="PROSITE" id="PS00959">
    <property type="entry name" value="HISTONE_H3_2"/>
    <property type="match status" value="1"/>
</dbReference>
<organism>
    <name type="scientific">Caenorhabditis elegans</name>
    <dbReference type="NCBI Taxonomy" id="6239"/>
    <lineage>
        <taxon>Eukaryota</taxon>
        <taxon>Metazoa</taxon>
        <taxon>Ecdysozoa</taxon>
        <taxon>Nematoda</taxon>
        <taxon>Chromadorea</taxon>
        <taxon>Rhabditida</taxon>
        <taxon>Rhabditina</taxon>
        <taxon>Rhabditomorpha</taxon>
        <taxon>Rhabditoidea</taxon>
        <taxon>Rhabditidae</taxon>
        <taxon>Peloderinae</taxon>
        <taxon>Caenorhabditis</taxon>
    </lineage>
</organism>
<comment type="function">
    <text evidence="3">Variant histone H3 which replaces conventional H3 in a wide range of nucleosomes in active genes. Constitutes the predominant form of histone H3 in non-dividing cells and is incorporated into chromatin independently of DNA synthesis. Deposited at sites of nucleosomal displacement throughout transcribed genes, suggesting that it represents an epigenetic imprint of transcriptionally active chromatin. Nucleosomes wrap and compact DNA into chromatin, limiting DNA accessibility to the cellular machineries which require DNA as a template. Histones thereby play a central role in transcription regulation, DNA repair, DNA replication and chromosomal stability. DNA accessibility is regulated via a complex set of post-translational modifications of histones, also called histone code, and nucleosome remodeling.</text>
</comment>
<comment type="subunit">
    <text>The nucleosome is a histone octamer containing two molecules each of H2A, H2B, H3 and H4 assembled in one H3-H4 heterotetramer and two H2A-H2B heterodimers. The octamer wraps approximately 147 bp of DNA.</text>
</comment>
<comment type="subcellular location">
    <subcellularLocation>
        <location evidence="1">Nucleus</location>
    </subcellularLocation>
    <subcellularLocation>
        <location evidence="1">Chromosome</location>
    </subcellularLocation>
</comment>
<comment type="tissue specificity">
    <text evidence="3">Highly expressed in all adult nuclei.</text>
</comment>
<comment type="PTM">
    <text evidence="1">Acetylation is generally linked to gene activation.</text>
</comment>
<comment type="PTM">
    <text evidence="1">Methylation at Lys-5 is linked to gene activation. Methylation at Lys-10 is linked to gene repression (By similarity).</text>
</comment>
<comment type="similarity">
    <text evidence="4">Belongs to the histone H3 family.</text>
</comment>
<evidence type="ECO:0000250" key="1"/>
<evidence type="ECO:0000256" key="2">
    <source>
        <dbReference type="SAM" id="MobiDB-lite"/>
    </source>
</evidence>
<evidence type="ECO:0000269" key="3">
    <source>
    </source>
</evidence>
<evidence type="ECO:0000305" key="4"/>
<feature type="initiator methionine" description="Removed" evidence="1">
    <location>
        <position position="1"/>
    </location>
</feature>
<feature type="chain" id="PRO_0000221298" description="Histone H3.3 type 1">
    <location>
        <begin position="2"/>
        <end position="136"/>
    </location>
</feature>
<feature type="region of interest" description="Disordered" evidence="2">
    <location>
        <begin position="1"/>
        <end position="43"/>
    </location>
</feature>
<feature type="modified residue" description="N6,N6,N6-trimethyllysine; alternate" evidence="1">
    <location>
        <position position="5"/>
    </location>
</feature>
<feature type="modified residue" description="N6,N6-dimethyllysine; alternate" evidence="1">
    <location>
        <position position="5"/>
    </location>
</feature>
<feature type="modified residue" description="N6-acetyllysine; alternate" evidence="1">
    <location>
        <position position="5"/>
    </location>
</feature>
<feature type="modified residue" description="N6-methyllysine; alternate" evidence="1">
    <location>
        <position position="5"/>
    </location>
</feature>
<feature type="modified residue" description="N6,N6,N6-trimethyllysine; alternate" evidence="1">
    <location>
        <position position="10"/>
    </location>
</feature>
<feature type="modified residue" description="N6,N6-dimethyllysine; alternate" evidence="1">
    <location>
        <position position="10"/>
    </location>
</feature>
<feature type="modified residue" description="N6-acetyllysine; alternate" evidence="1">
    <location>
        <position position="10"/>
    </location>
</feature>
<feature type="modified residue" description="Phosphoserine" evidence="1">
    <location>
        <position position="11"/>
    </location>
</feature>
<feature type="modified residue" description="N6-acetyllysine" evidence="1">
    <location>
        <position position="15"/>
    </location>
</feature>
<feature type="modified residue" description="N6-acetyllysine" evidence="1">
    <location>
        <position position="24"/>
    </location>
</feature>
<feature type="modified residue" description="N6,N6,N6-trimethyllysine; alternate" evidence="1">
    <location>
        <position position="28"/>
    </location>
</feature>
<feature type="modified residue" description="N6,N6-dimethyllysine; alternate" evidence="1">
    <location>
        <position position="28"/>
    </location>
</feature>
<feature type="modified residue" description="N6-methyllysine; alternate" evidence="1">
    <location>
        <position position="28"/>
    </location>
</feature>
<feature type="modified residue" description="Phosphoserine" evidence="1">
    <location>
        <position position="29"/>
    </location>
</feature>
<feature type="modified residue" description="N6,N6,N6-trimethyllysine; alternate" evidence="1">
    <location>
        <position position="37"/>
    </location>
</feature>
<feature type="modified residue" description="N6-methyllysine; alternate" evidence="1">
    <location>
        <position position="37"/>
    </location>
</feature>
<feature type="modified residue" description="N6-methyllysine" evidence="1">
    <location>
        <position position="80"/>
    </location>
</feature>
<keyword id="KW-0002">3D-structure</keyword>
<keyword id="KW-0007">Acetylation</keyword>
<keyword id="KW-0158">Chromosome</keyword>
<keyword id="KW-0238">DNA-binding</keyword>
<keyword id="KW-0488">Methylation</keyword>
<keyword id="KW-0544">Nucleosome core</keyword>
<keyword id="KW-0539">Nucleus</keyword>
<keyword id="KW-0597">Phosphoprotein</keyword>
<keyword id="KW-1185">Reference proteome</keyword>
<sequence>MARTKQTARKSTGGKAPRKQLATKAARKSAPTTGGVKKPHRYRPGTVALREIRRYQKSTELLIRKLPFQRLVREIAQDFKTDLRFQSAAIGALQEASEAYLVGLFEDTNLCAIHAKRVTIMPKDIQLARRIRGERA</sequence>
<name>H331_CAEEL</name>